<accession>Q21NH6</accession>
<sequence length="243" mass="25635">MIVIPAIDLKDGACVRLRQGLMEDSTVFSDDPAAMARKWVEQGAKRLHLVDLNGAFAGEPVNGEVVKAIAKAYPNLPIQIGGGIRSLETIKHYLDAGVTYVIIGTKAVKEPEFVKQACDAFPGHIIVGLDAKDGYVATDGWAEVSTVKATDLAKQFAADGVSEIVYTDIARDGMMQGVNIEATVEMARAGNIPIIASGGITNMDDIKGLMAVAHEGITGAITGRAIYEGSLDLAEAQAYCDAQ</sequence>
<protein>
    <recommendedName>
        <fullName evidence="1">1-(5-phosphoribosyl)-5-[(5-phosphoribosylamino)methylideneamino] imidazole-4-carboxamide isomerase</fullName>
        <ecNumber evidence="1">5.3.1.16</ecNumber>
    </recommendedName>
    <alternativeName>
        <fullName evidence="1">Phosphoribosylformimino-5-aminoimidazole carboxamide ribotide isomerase</fullName>
    </alternativeName>
</protein>
<gene>
    <name evidence="1" type="primary">hisA</name>
    <name type="ordered locus">Sde_0489</name>
</gene>
<feature type="chain" id="PRO_0000290531" description="1-(5-phosphoribosyl)-5-[(5-phosphoribosylamino)methylideneamino] imidazole-4-carboxamide isomerase">
    <location>
        <begin position="1"/>
        <end position="243"/>
    </location>
</feature>
<feature type="active site" description="Proton acceptor" evidence="1">
    <location>
        <position position="8"/>
    </location>
</feature>
<feature type="active site" description="Proton donor" evidence="1">
    <location>
        <position position="130"/>
    </location>
</feature>
<keyword id="KW-0028">Amino-acid biosynthesis</keyword>
<keyword id="KW-0963">Cytoplasm</keyword>
<keyword id="KW-0368">Histidine biosynthesis</keyword>
<keyword id="KW-0413">Isomerase</keyword>
<keyword id="KW-1185">Reference proteome</keyword>
<comment type="catalytic activity">
    <reaction evidence="1">
        <text>1-(5-phospho-beta-D-ribosyl)-5-[(5-phospho-beta-D-ribosylamino)methylideneamino]imidazole-4-carboxamide = 5-[(5-phospho-1-deoxy-D-ribulos-1-ylimino)methylamino]-1-(5-phospho-beta-D-ribosyl)imidazole-4-carboxamide</text>
        <dbReference type="Rhea" id="RHEA:15469"/>
        <dbReference type="ChEBI" id="CHEBI:58435"/>
        <dbReference type="ChEBI" id="CHEBI:58525"/>
        <dbReference type="EC" id="5.3.1.16"/>
    </reaction>
</comment>
<comment type="pathway">
    <text evidence="1">Amino-acid biosynthesis; L-histidine biosynthesis; L-histidine from 5-phospho-alpha-D-ribose 1-diphosphate: step 4/9.</text>
</comment>
<comment type="subcellular location">
    <subcellularLocation>
        <location evidence="1">Cytoplasm</location>
    </subcellularLocation>
</comment>
<comment type="similarity">
    <text evidence="1">Belongs to the HisA/HisF family.</text>
</comment>
<name>HIS4_SACD2</name>
<proteinExistence type="inferred from homology"/>
<dbReference type="EC" id="5.3.1.16" evidence="1"/>
<dbReference type="EMBL" id="CP000282">
    <property type="protein sequence ID" value="ABD79753.1"/>
    <property type="molecule type" value="Genomic_DNA"/>
</dbReference>
<dbReference type="RefSeq" id="WP_011466974.1">
    <property type="nucleotide sequence ID" value="NC_007912.1"/>
</dbReference>
<dbReference type="SMR" id="Q21NH6"/>
<dbReference type="STRING" id="203122.Sde_0489"/>
<dbReference type="GeneID" id="98612189"/>
<dbReference type="KEGG" id="sde:Sde_0489"/>
<dbReference type="eggNOG" id="COG0106">
    <property type="taxonomic scope" value="Bacteria"/>
</dbReference>
<dbReference type="HOGENOM" id="CLU_048577_1_1_6"/>
<dbReference type="OrthoDB" id="9807749at2"/>
<dbReference type="UniPathway" id="UPA00031">
    <property type="reaction ID" value="UER00009"/>
</dbReference>
<dbReference type="Proteomes" id="UP000001947">
    <property type="component" value="Chromosome"/>
</dbReference>
<dbReference type="GO" id="GO:0005737">
    <property type="term" value="C:cytoplasm"/>
    <property type="evidence" value="ECO:0007669"/>
    <property type="project" value="UniProtKB-SubCell"/>
</dbReference>
<dbReference type="GO" id="GO:0003949">
    <property type="term" value="F:1-(5-phosphoribosyl)-5-[(5-phosphoribosylamino)methylideneamino]imidazole-4-carboxamide isomerase activity"/>
    <property type="evidence" value="ECO:0007669"/>
    <property type="project" value="UniProtKB-UniRule"/>
</dbReference>
<dbReference type="GO" id="GO:0000105">
    <property type="term" value="P:L-histidine biosynthetic process"/>
    <property type="evidence" value="ECO:0007669"/>
    <property type="project" value="UniProtKB-UniRule"/>
</dbReference>
<dbReference type="GO" id="GO:0000162">
    <property type="term" value="P:L-tryptophan biosynthetic process"/>
    <property type="evidence" value="ECO:0007669"/>
    <property type="project" value="TreeGrafter"/>
</dbReference>
<dbReference type="CDD" id="cd04732">
    <property type="entry name" value="HisA"/>
    <property type="match status" value="1"/>
</dbReference>
<dbReference type="FunFam" id="3.20.20.70:FF:000009">
    <property type="entry name" value="1-(5-phosphoribosyl)-5-[(5-phosphoribosylamino)methylideneamino] imidazole-4-carboxamide isomerase"/>
    <property type="match status" value="1"/>
</dbReference>
<dbReference type="Gene3D" id="3.20.20.70">
    <property type="entry name" value="Aldolase class I"/>
    <property type="match status" value="1"/>
</dbReference>
<dbReference type="HAMAP" id="MF_01014">
    <property type="entry name" value="HisA"/>
    <property type="match status" value="1"/>
</dbReference>
<dbReference type="InterPro" id="IPR013785">
    <property type="entry name" value="Aldolase_TIM"/>
</dbReference>
<dbReference type="InterPro" id="IPR006062">
    <property type="entry name" value="His_biosynth"/>
</dbReference>
<dbReference type="InterPro" id="IPR006063">
    <property type="entry name" value="HisA_bact_arch"/>
</dbReference>
<dbReference type="InterPro" id="IPR044524">
    <property type="entry name" value="Isoase_HisA-like"/>
</dbReference>
<dbReference type="InterPro" id="IPR023016">
    <property type="entry name" value="Isoase_HisA-like_bact"/>
</dbReference>
<dbReference type="InterPro" id="IPR011060">
    <property type="entry name" value="RibuloseP-bd_barrel"/>
</dbReference>
<dbReference type="NCBIfam" id="TIGR00007">
    <property type="entry name" value="1-(5-phosphoribosyl)-5-[(5-phosphoribosylamino)methylideneamino]imidazole-4-carboxamide isomerase"/>
    <property type="match status" value="1"/>
</dbReference>
<dbReference type="NCBIfam" id="NF010112">
    <property type="entry name" value="PRK13585.1"/>
    <property type="match status" value="1"/>
</dbReference>
<dbReference type="PANTHER" id="PTHR43090">
    <property type="entry name" value="1-(5-PHOSPHORIBOSYL)-5-[(5-PHOSPHORIBOSYLAMINO)METHYLIDENEAMINO] IMIDAZOLE-4-CARBOXAMIDE ISOMERASE"/>
    <property type="match status" value="1"/>
</dbReference>
<dbReference type="PANTHER" id="PTHR43090:SF2">
    <property type="entry name" value="1-(5-PHOSPHORIBOSYL)-5-[(5-PHOSPHORIBOSYLAMINO)METHYLIDENEAMINO] IMIDAZOLE-4-CARBOXAMIDE ISOMERASE"/>
    <property type="match status" value="1"/>
</dbReference>
<dbReference type="Pfam" id="PF00977">
    <property type="entry name" value="His_biosynth"/>
    <property type="match status" value="1"/>
</dbReference>
<dbReference type="SUPFAM" id="SSF51366">
    <property type="entry name" value="Ribulose-phoshate binding barrel"/>
    <property type="match status" value="1"/>
</dbReference>
<reference key="1">
    <citation type="journal article" date="2008" name="PLoS Genet.">
        <title>Complete genome sequence of the complex carbohydrate-degrading marine bacterium, Saccharophagus degradans strain 2-40 T.</title>
        <authorList>
            <person name="Weiner R.M."/>
            <person name="Taylor L.E. II"/>
            <person name="Henrissat B."/>
            <person name="Hauser L."/>
            <person name="Land M."/>
            <person name="Coutinho P.M."/>
            <person name="Rancurel C."/>
            <person name="Saunders E.H."/>
            <person name="Longmire A.G."/>
            <person name="Zhang H."/>
            <person name="Bayer E.A."/>
            <person name="Gilbert H.J."/>
            <person name="Larimer F."/>
            <person name="Zhulin I.B."/>
            <person name="Ekborg N.A."/>
            <person name="Lamed R."/>
            <person name="Richardson P.M."/>
            <person name="Borovok I."/>
            <person name="Hutcheson S."/>
        </authorList>
    </citation>
    <scope>NUCLEOTIDE SEQUENCE [LARGE SCALE GENOMIC DNA]</scope>
    <source>
        <strain>2-40 / ATCC 43961 / DSM 17024</strain>
    </source>
</reference>
<evidence type="ECO:0000255" key="1">
    <source>
        <dbReference type="HAMAP-Rule" id="MF_01014"/>
    </source>
</evidence>
<organism>
    <name type="scientific">Saccharophagus degradans (strain 2-40 / ATCC 43961 / DSM 17024)</name>
    <dbReference type="NCBI Taxonomy" id="203122"/>
    <lineage>
        <taxon>Bacteria</taxon>
        <taxon>Pseudomonadati</taxon>
        <taxon>Pseudomonadota</taxon>
        <taxon>Gammaproteobacteria</taxon>
        <taxon>Cellvibrionales</taxon>
        <taxon>Cellvibrionaceae</taxon>
        <taxon>Saccharophagus</taxon>
    </lineage>
</organism>